<accession>B5FNT5</accession>
<feature type="chain" id="PRO_1000188487" description="Nucleoside triphosphatase NudI">
    <location>
        <begin position="1"/>
        <end position="141"/>
    </location>
</feature>
<feature type="domain" description="Nudix hydrolase" evidence="1">
    <location>
        <begin position="1"/>
        <end position="141"/>
    </location>
</feature>
<feature type="short sequence motif" description="Nudix box">
    <location>
        <begin position="38"/>
        <end position="59"/>
    </location>
</feature>
<proteinExistence type="inferred from homology"/>
<reference key="1">
    <citation type="journal article" date="2011" name="J. Bacteriol.">
        <title>Comparative genomics of 28 Salmonella enterica isolates: evidence for CRISPR-mediated adaptive sublineage evolution.</title>
        <authorList>
            <person name="Fricke W.F."/>
            <person name="Mammel M.K."/>
            <person name="McDermott P.F."/>
            <person name="Tartera C."/>
            <person name="White D.G."/>
            <person name="Leclerc J.E."/>
            <person name="Ravel J."/>
            <person name="Cebula T.A."/>
        </authorList>
    </citation>
    <scope>NUCLEOTIDE SEQUENCE [LARGE SCALE GENOMIC DNA]</scope>
    <source>
        <strain>CT_02021853</strain>
    </source>
</reference>
<sequence length="141" mass="16302">MRQRTIVCPLIQNDGCYLLCKMADNRGVFPGQWALSGGGVEPGERIEEALRREIREELGEQLILSDITPWTFRDDIRIKTYADGRQEEIYMIYLIFDCVSANRDICINDEFQDYAWVKPEELALYDLNVATRHTLALKGLL</sequence>
<name>NUDI_SALDC</name>
<organism>
    <name type="scientific">Salmonella dublin (strain CT_02021853)</name>
    <dbReference type="NCBI Taxonomy" id="439851"/>
    <lineage>
        <taxon>Bacteria</taxon>
        <taxon>Pseudomonadati</taxon>
        <taxon>Pseudomonadota</taxon>
        <taxon>Gammaproteobacteria</taxon>
        <taxon>Enterobacterales</taxon>
        <taxon>Enterobacteriaceae</taxon>
        <taxon>Salmonella</taxon>
    </lineage>
</organism>
<gene>
    <name evidence="1" type="primary">nudI</name>
    <name type="ordered locus">SeD_A2639</name>
</gene>
<evidence type="ECO:0000255" key="1">
    <source>
        <dbReference type="HAMAP-Rule" id="MF_01846"/>
    </source>
</evidence>
<protein>
    <recommendedName>
        <fullName evidence="1">Nucleoside triphosphatase NudI</fullName>
        <ecNumber evidence="1">3.6.1.9</ecNumber>
    </recommendedName>
    <alternativeName>
        <fullName evidence="1">Nucleotide diphosphatase NudI</fullName>
    </alternativeName>
    <alternativeName>
        <fullName evidence="1">Pyrimidine deoxynucleoside triphosphate diphosphatase</fullName>
    </alternativeName>
    <alternativeName>
        <fullName evidence="1">dCTP diphosphatase</fullName>
        <ecNumber evidence="1">3.6.1.12</ecNumber>
    </alternativeName>
    <alternativeName>
        <fullName evidence="1">dTTP diphosphatase</fullName>
        <ecNumber evidence="1">3.6.1.-</ecNumber>
    </alternativeName>
    <alternativeName>
        <fullName evidence="1">dUTP diphosphatase</fullName>
        <ecNumber evidence="1">3.6.1.23</ecNumber>
    </alternativeName>
</protein>
<keyword id="KW-0378">Hydrolase</keyword>
<keyword id="KW-0460">Magnesium</keyword>
<dbReference type="EC" id="3.6.1.9" evidence="1"/>
<dbReference type="EC" id="3.6.1.12" evidence="1"/>
<dbReference type="EC" id="3.6.1.-" evidence="1"/>
<dbReference type="EC" id="3.6.1.23" evidence="1"/>
<dbReference type="EMBL" id="CP001144">
    <property type="protein sequence ID" value="ACH76069.1"/>
    <property type="molecule type" value="Genomic_DNA"/>
</dbReference>
<dbReference type="RefSeq" id="WP_001249900.1">
    <property type="nucleotide sequence ID" value="NC_011205.1"/>
</dbReference>
<dbReference type="SMR" id="B5FNT5"/>
<dbReference type="KEGG" id="sed:SeD_A2639"/>
<dbReference type="HOGENOM" id="CLU_037162_31_0_6"/>
<dbReference type="Proteomes" id="UP000008322">
    <property type="component" value="Chromosome"/>
</dbReference>
<dbReference type="GO" id="GO:0047840">
    <property type="term" value="F:dCTP diphosphatase activity"/>
    <property type="evidence" value="ECO:0007669"/>
    <property type="project" value="UniProtKB-EC"/>
</dbReference>
<dbReference type="GO" id="GO:0036218">
    <property type="term" value="F:dTTP diphosphatase activity"/>
    <property type="evidence" value="ECO:0007669"/>
    <property type="project" value="RHEA"/>
</dbReference>
<dbReference type="GO" id="GO:0004170">
    <property type="term" value="F:dUTP diphosphatase activity"/>
    <property type="evidence" value="ECO:0007669"/>
    <property type="project" value="UniProtKB-EC"/>
</dbReference>
<dbReference type="GO" id="GO:0000287">
    <property type="term" value="F:magnesium ion binding"/>
    <property type="evidence" value="ECO:0007669"/>
    <property type="project" value="UniProtKB-UniRule"/>
</dbReference>
<dbReference type="CDD" id="cd04696">
    <property type="entry name" value="NUDIX_NudI"/>
    <property type="match status" value="1"/>
</dbReference>
<dbReference type="Gene3D" id="3.90.79.10">
    <property type="entry name" value="Nucleoside Triphosphate Pyrophosphohydrolase"/>
    <property type="match status" value="1"/>
</dbReference>
<dbReference type="HAMAP" id="MF_01846">
    <property type="entry name" value="Nudix_NudI"/>
    <property type="match status" value="1"/>
</dbReference>
<dbReference type="InterPro" id="IPR023781">
    <property type="entry name" value="Nucleoside_triphosphatase_NudI"/>
</dbReference>
<dbReference type="InterPro" id="IPR020476">
    <property type="entry name" value="Nudix_hydrolase"/>
</dbReference>
<dbReference type="InterPro" id="IPR015797">
    <property type="entry name" value="NUDIX_hydrolase-like_dom_sf"/>
</dbReference>
<dbReference type="InterPro" id="IPR020084">
    <property type="entry name" value="NUDIX_hydrolase_CS"/>
</dbReference>
<dbReference type="InterPro" id="IPR000086">
    <property type="entry name" value="NUDIX_hydrolase_dom"/>
</dbReference>
<dbReference type="NCBIfam" id="NF012016">
    <property type="entry name" value="PRK15472.1"/>
    <property type="match status" value="1"/>
</dbReference>
<dbReference type="PANTHER" id="PTHR43046">
    <property type="entry name" value="GDP-MANNOSE MANNOSYL HYDROLASE"/>
    <property type="match status" value="1"/>
</dbReference>
<dbReference type="PANTHER" id="PTHR43046:SF14">
    <property type="entry name" value="MUTT_NUDIX FAMILY PROTEIN"/>
    <property type="match status" value="1"/>
</dbReference>
<dbReference type="Pfam" id="PF00293">
    <property type="entry name" value="NUDIX"/>
    <property type="match status" value="1"/>
</dbReference>
<dbReference type="PRINTS" id="PR00502">
    <property type="entry name" value="NUDIXFAMILY"/>
</dbReference>
<dbReference type="SUPFAM" id="SSF55811">
    <property type="entry name" value="Nudix"/>
    <property type="match status" value="1"/>
</dbReference>
<dbReference type="PROSITE" id="PS51462">
    <property type="entry name" value="NUDIX"/>
    <property type="match status" value="1"/>
</dbReference>
<dbReference type="PROSITE" id="PS00893">
    <property type="entry name" value="NUDIX_BOX"/>
    <property type="match status" value="1"/>
</dbReference>
<comment type="function">
    <text evidence="1">Catalyzes the hydrolysis of nucleoside triphosphates, with a preference for pyrimidine deoxynucleoside triphosphates (dUTP, dTTP and dCTP).</text>
</comment>
<comment type="catalytic activity">
    <reaction evidence="1">
        <text>a ribonucleoside 5'-triphosphate + H2O = a ribonucleoside 5'-phosphate + diphosphate + H(+)</text>
        <dbReference type="Rhea" id="RHEA:23996"/>
        <dbReference type="ChEBI" id="CHEBI:15377"/>
        <dbReference type="ChEBI" id="CHEBI:15378"/>
        <dbReference type="ChEBI" id="CHEBI:33019"/>
        <dbReference type="ChEBI" id="CHEBI:58043"/>
        <dbReference type="ChEBI" id="CHEBI:61557"/>
        <dbReference type="EC" id="3.6.1.9"/>
    </reaction>
</comment>
<comment type="catalytic activity">
    <reaction evidence="1">
        <text>a 2'-deoxyribonucleoside 5'-triphosphate + H2O = a 2'-deoxyribonucleoside 5'-phosphate + diphosphate + H(+)</text>
        <dbReference type="Rhea" id="RHEA:44644"/>
        <dbReference type="ChEBI" id="CHEBI:15377"/>
        <dbReference type="ChEBI" id="CHEBI:15378"/>
        <dbReference type="ChEBI" id="CHEBI:33019"/>
        <dbReference type="ChEBI" id="CHEBI:61560"/>
        <dbReference type="ChEBI" id="CHEBI:65317"/>
        <dbReference type="EC" id="3.6.1.9"/>
    </reaction>
</comment>
<comment type="catalytic activity">
    <reaction evidence="1">
        <text>dUTP + H2O = dUMP + diphosphate + H(+)</text>
        <dbReference type="Rhea" id="RHEA:10248"/>
        <dbReference type="ChEBI" id="CHEBI:15377"/>
        <dbReference type="ChEBI" id="CHEBI:15378"/>
        <dbReference type="ChEBI" id="CHEBI:33019"/>
        <dbReference type="ChEBI" id="CHEBI:61555"/>
        <dbReference type="ChEBI" id="CHEBI:246422"/>
        <dbReference type="EC" id="3.6.1.9"/>
    </reaction>
</comment>
<comment type="catalytic activity">
    <reaction evidence="1">
        <text>dUTP + H2O = dUMP + diphosphate + H(+)</text>
        <dbReference type="Rhea" id="RHEA:10248"/>
        <dbReference type="ChEBI" id="CHEBI:15377"/>
        <dbReference type="ChEBI" id="CHEBI:15378"/>
        <dbReference type="ChEBI" id="CHEBI:33019"/>
        <dbReference type="ChEBI" id="CHEBI:61555"/>
        <dbReference type="ChEBI" id="CHEBI:246422"/>
        <dbReference type="EC" id="3.6.1.23"/>
    </reaction>
</comment>
<comment type="catalytic activity">
    <reaction evidence="1">
        <text>dTTP + H2O = dTMP + diphosphate + H(+)</text>
        <dbReference type="Rhea" id="RHEA:28534"/>
        <dbReference type="ChEBI" id="CHEBI:15377"/>
        <dbReference type="ChEBI" id="CHEBI:15378"/>
        <dbReference type="ChEBI" id="CHEBI:33019"/>
        <dbReference type="ChEBI" id="CHEBI:37568"/>
        <dbReference type="ChEBI" id="CHEBI:63528"/>
        <dbReference type="EC" id="3.6.1.9"/>
    </reaction>
</comment>
<comment type="catalytic activity">
    <reaction evidence="1">
        <text>dCTP + H2O = dCMP + diphosphate + H(+)</text>
        <dbReference type="Rhea" id="RHEA:22636"/>
        <dbReference type="ChEBI" id="CHEBI:15377"/>
        <dbReference type="ChEBI" id="CHEBI:15378"/>
        <dbReference type="ChEBI" id="CHEBI:33019"/>
        <dbReference type="ChEBI" id="CHEBI:57566"/>
        <dbReference type="ChEBI" id="CHEBI:61481"/>
        <dbReference type="EC" id="3.6.1.9"/>
    </reaction>
</comment>
<comment type="catalytic activity">
    <reaction evidence="1">
        <text>dCTP + H2O = dCMP + diphosphate + H(+)</text>
        <dbReference type="Rhea" id="RHEA:22636"/>
        <dbReference type="ChEBI" id="CHEBI:15377"/>
        <dbReference type="ChEBI" id="CHEBI:15378"/>
        <dbReference type="ChEBI" id="CHEBI:33019"/>
        <dbReference type="ChEBI" id="CHEBI:57566"/>
        <dbReference type="ChEBI" id="CHEBI:61481"/>
        <dbReference type="EC" id="3.6.1.12"/>
    </reaction>
</comment>
<comment type="cofactor">
    <cofactor evidence="1">
        <name>Mg(2+)</name>
        <dbReference type="ChEBI" id="CHEBI:18420"/>
    </cofactor>
</comment>
<comment type="subunit">
    <text evidence="1">Monomer.</text>
</comment>
<comment type="similarity">
    <text evidence="1">Belongs to the Nudix hydrolase family. NudI subfamily.</text>
</comment>